<dbReference type="EC" id="2.4.1.-"/>
<dbReference type="EMBL" id="AJ302047">
    <property type="protein sequence ID" value="CAC41643.1"/>
    <property type="molecule type" value="mRNA"/>
</dbReference>
<dbReference type="EMBL" id="AE014298">
    <property type="protein sequence ID" value="EAA46057.5"/>
    <property type="molecule type" value="Genomic_DNA"/>
</dbReference>
<dbReference type="RefSeq" id="NP_001036320.3">
    <property type="nucleotide sequence ID" value="NM_001042855.4"/>
</dbReference>
<dbReference type="SMR" id="P83088"/>
<dbReference type="BioGRID" id="78296">
    <property type="interactions" value="1"/>
</dbReference>
<dbReference type="FunCoup" id="P83088">
    <property type="interactions" value="31"/>
</dbReference>
<dbReference type="IntAct" id="P83088">
    <property type="interactions" value="1"/>
</dbReference>
<dbReference type="STRING" id="7227.FBpp0289204"/>
<dbReference type="CAZy" id="GT10">
    <property type="family name" value="Glycosyltransferase Family 10"/>
</dbReference>
<dbReference type="GlyCosmos" id="P83088">
    <property type="glycosylation" value="2 sites, No reported glycans"/>
</dbReference>
<dbReference type="GlyGen" id="P83088">
    <property type="glycosylation" value="2 sites"/>
</dbReference>
<dbReference type="PaxDb" id="7227-FBpp0289204"/>
<dbReference type="EnsemblMetazoa" id="FBtr0299926">
    <property type="protein sequence ID" value="FBpp0289204"/>
    <property type="gene ID" value="FBgn0044872"/>
</dbReference>
<dbReference type="GeneID" id="3355171"/>
<dbReference type="KEGG" id="dme:Dmel_CG40305"/>
<dbReference type="UCSC" id="CG40305-RB">
    <property type="organism name" value="d. melanogaster"/>
</dbReference>
<dbReference type="AGR" id="FB:FBgn0044872"/>
<dbReference type="CTD" id="3355171"/>
<dbReference type="FlyBase" id="FBgn0044872">
    <property type="gene designation" value="FucTC"/>
</dbReference>
<dbReference type="VEuPathDB" id="VectorBase:FBgn0044872"/>
<dbReference type="eggNOG" id="KOG2619">
    <property type="taxonomic scope" value="Eukaryota"/>
</dbReference>
<dbReference type="HOGENOM" id="CLU_646520_0_0_1"/>
<dbReference type="InParanoid" id="P83088"/>
<dbReference type="OMA" id="CPVYQCE"/>
<dbReference type="OrthoDB" id="427096at2759"/>
<dbReference type="PhylomeDB" id="P83088"/>
<dbReference type="SignaLink" id="P83088"/>
<dbReference type="UniPathway" id="UPA00378"/>
<dbReference type="BioGRID-ORCS" id="3355171">
    <property type="hits" value="0 hits in 3 CRISPR screens"/>
</dbReference>
<dbReference type="GenomeRNAi" id="3355171"/>
<dbReference type="PRO" id="PR:P83088"/>
<dbReference type="Proteomes" id="UP000000803">
    <property type="component" value="Chromosome X"/>
</dbReference>
<dbReference type="Bgee" id="FBgn0044872">
    <property type="expression patterns" value="Expressed in adult posterior midgut class II enteroendocrine cell in adult midgut (Drosophila) and 18 other cell types or tissues"/>
</dbReference>
<dbReference type="ExpressionAtlas" id="P83088">
    <property type="expression patterns" value="baseline and differential"/>
</dbReference>
<dbReference type="GO" id="GO:0032580">
    <property type="term" value="C:Golgi cisterna membrane"/>
    <property type="evidence" value="ECO:0007669"/>
    <property type="project" value="UniProtKB-SubCell"/>
</dbReference>
<dbReference type="GO" id="GO:0008417">
    <property type="term" value="F:fucosyltransferase activity"/>
    <property type="evidence" value="ECO:0007669"/>
    <property type="project" value="InterPro"/>
</dbReference>
<dbReference type="GO" id="GO:0036065">
    <property type="term" value="P:fucosylation"/>
    <property type="evidence" value="ECO:0007669"/>
    <property type="project" value="UniProtKB-ARBA"/>
</dbReference>
<dbReference type="GO" id="GO:0006486">
    <property type="term" value="P:protein glycosylation"/>
    <property type="evidence" value="ECO:0007669"/>
    <property type="project" value="UniProtKB-UniPathway"/>
</dbReference>
<dbReference type="FunFam" id="3.40.50.11660:FF:000006">
    <property type="entry name" value="Alpha-(1,3)-fucosyltransferase C"/>
    <property type="match status" value="1"/>
</dbReference>
<dbReference type="Gene3D" id="3.40.50.11660">
    <property type="entry name" value="Glycosyl transferase family 10, C-terminal domain"/>
    <property type="match status" value="1"/>
</dbReference>
<dbReference type="InterPro" id="IPR055270">
    <property type="entry name" value="Glyco_tran_10_C"/>
</dbReference>
<dbReference type="InterPro" id="IPR031481">
    <property type="entry name" value="Glyco_tran_10_N"/>
</dbReference>
<dbReference type="InterPro" id="IPR001503">
    <property type="entry name" value="Glyco_trans_10"/>
</dbReference>
<dbReference type="InterPro" id="IPR038577">
    <property type="entry name" value="GT10-like_C_sf"/>
</dbReference>
<dbReference type="PANTHER" id="PTHR48438">
    <property type="entry name" value="ALPHA-(1,3)-FUCOSYLTRANSFERASE C-RELATED"/>
    <property type="match status" value="1"/>
</dbReference>
<dbReference type="PANTHER" id="PTHR48438:SF1">
    <property type="entry name" value="ALPHA-(1,3)-FUCOSYLTRANSFERASE C-RELATED"/>
    <property type="match status" value="1"/>
</dbReference>
<dbReference type="Pfam" id="PF17039">
    <property type="entry name" value="Glyco_tran_10_N"/>
    <property type="match status" value="1"/>
</dbReference>
<dbReference type="Pfam" id="PF00852">
    <property type="entry name" value="Glyco_transf_10"/>
    <property type="match status" value="1"/>
</dbReference>
<dbReference type="SUPFAM" id="SSF53756">
    <property type="entry name" value="UDP-Glycosyltransferase/glycogen phosphorylase"/>
    <property type="match status" value="1"/>
</dbReference>
<accession>P83088</accession>
<accession>Q7PLF1</accession>
<sequence length="425" mass="49130">MYLGRVHCSFEVPGLLSGRVGHMSMAVRSVRLACGPRGALLLLLLVLLGVLVVLHKVTQSPLLNQNKILQDHLRGQHERYIQSTRTILLWTEFFGDSRWKLSWDTLGPQELRDELHCPVYQCEISNQNAFLPAVELYDAIVFHAAEMFPLLRPVPSQRSPHQVYVFALMEPPGETKHRLDDEQGFYNLTMTYRIDSDVFWPYGQLLDITADAVVAPSVKPPWRKPPVAFNDSLVWDLWSGKTKTAAWFVSHCETLSKREVLANRLQEFFEVDIYGNCGTLSCTRGDPHCAEMLDTDYFFYLAFENSLCDDYVTEKLFDALERTVIPVVFGGADYSRILPPHSYVDANRFMSVEGLAQYMKLVVADPDLYVSYFWWRSHYRLTYSSPFCDLCARLHDPSFGHKTQFYHDIQSWWFNSCRLQSRIRL</sequence>
<protein>
    <recommendedName>
        <fullName>Alpha-(1,3)-fucosyltransferase C</fullName>
        <ecNumber>2.4.1.-</ecNumber>
    </recommendedName>
    <alternativeName>
        <fullName>Galactoside 3-L-fucosyltransferase</fullName>
    </alternativeName>
</protein>
<reference key="1">
    <citation type="journal article" date="2001" name="J. Biol. Chem.">
        <title>Identification of core alpha1,3-fucosylated glycans and cloning of the requisite fucosyltransferase cDNA from Drosophila melanogaster: Potential basis of the neural anti-horseradish peroxidase epitope.</title>
        <authorList>
            <person name="Fabini G."/>
            <person name="Freilinger A."/>
            <person name="Altmann F."/>
            <person name="Wilson I.B.H."/>
        </authorList>
    </citation>
    <scope>NUCLEOTIDE SEQUENCE [MRNA]</scope>
    <source>
        <strain>Canton-S</strain>
    </source>
</reference>
<reference key="2">
    <citation type="journal article" date="2000" name="Science">
        <title>The genome sequence of Drosophila melanogaster.</title>
        <authorList>
            <person name="Adams M.D."/>
            <person name="Celniker S.E."/>
            <person name="Holt R.A."/>
            <person name="Evans C.A."/>
            <person name="Gocayne J.D."/>
            <person name="Amanatides P.G."/>
            <person name="Scherer S.E."/>
            <person name="Li P.W."/>
            <person name="Hoskins R.A."/>
            <person name="Galle R.F."/>
            <person name="George R.A."/>
            <person name="Lewis S.E."/>
            <person name="Richards S."/>
            <person name="Ashburner M."/>
            <person name="Henderson S.N."/>
            <person name="Sutton G.G."/>
            <person name="Wortman J.R."/>
            <person name="Yandell M.D."/>
            <person name="Zhang Q."/>
            <person name="Chen L.X."/>
            <person name="Brandon R.C."/>
            <person name="Rogers Y.-H.C."/>
            <person name="Blazej R.G."/>
            <person name="Champe M."/>
            <person name="Pfeiffer B.D."/>
            <person name="Wan K.H."/>
            <person name="Doyle C."/>
            <person name="Baxter E.G."/>
            <person name="Helt G."/>
            <person name="Nelson C.R."/>
            <person name="Miklos G.L.G."/>
            <person name="Abril J.F."/>
            <person name="Agbayani A."/>
            <person name="An H.-J."/>
            <person name="Andrews-Pfannkoch C."/>
            <person name="Baldwin D."/>
            <person name="Ballew R.M."/>
            <person name="Basu A."/>
            <person name="Baxendale J."/>
            <person name="Bayraktaroglu L."/>
            <person name="Beasley E.M."/>
            <person name="Beeson K.Y."/>
            <person name="Benos P.V."/>
            <person name="Berman B.P."/>
            <person name="Bhandari D."/>
            <person name="Bolshakov S."/>
            <person name="Borkova D."/>
            <person name="Botchan M.R."/>
            <person name="Bouck J."/>
            <person name="Brokstein P."/>
            <person name="Brottier P."/>
            <person name="Burtis K.C."/>
            <person name="Busam D.A."/>
            <person name="Butler H."/>
            <person name="Cadieu E."/>
            <person name="Center A."/>
            <person name="Chandra I."/>
            <person name="Cherry J.M."/>
            <person name="Cawley S."/>
            <person name="Dahlke C."/>
            <person name="Davenport L.B."/>
            <person name="Davies P."/>
            <person name="de Pablos B."/>
            <person name="Delcher A."/>
            <person name="Deng Z."/>
            <person name="Mays A.D."/>
            <person name="Dew I."/>
            <person name="Dietz S.M."/>
            <person name="Dodson K."/>
            <person name="Doup L.E."/>
            <person name="Downes M."/>
            <person name="Dugan-Rocha S."/>
            <person name="Dunkov B.C."/>
            <person name="Dunn P."/>
            <person name="Durbin K.J."/>
            <person name="Evangelista C.C."/>
            <person name="Ferraz C."/>
            <person name="Ferriera S."/>
            <person name="Fleischmann W."/>
            <person name="Fosler C."/>
            <person name="Gabrielian A.E."/>
            <person name="Garg N.S."/>
            <person name="Gelbart W.M."/>
            <person name="Glasser K."/>
            <person name="Glodek A."/>
            <person name="Gong F."/>
            <person name="Gorrell J.H."/>
            <person name="Gu Z."/>
            <person name="Guan P."/>
            <person name="Harris M."/>
            <person name="Harris N.L."/>
            <person name="Harvey D.A."/>
            <person name="Heiman T.J."/>
            <person name="Hernandez J.R."/>
            <person name="Houck J."/>
            <person name="Hostin D."/>
            <person name="Houston K.A."/>
            <person name="Howland T.J."/>
            <person name="Wei M.-H."/>
            <person name="Ibegwam C."/>
            <person name="Jalali M."/>
            <person name="Kalush F."/>
            <person name="Karpen G.H."/>
            <person name="Ke Z."/>
            <person name="Kennison J.A."/>
            <person name="Ketchum K.A."/>
            <person name="Kimmel B.E."/>
            <person name="Kodira C.D."/>
            <person name="Kraft C.L."/>
            <person name="Kravitz S."/>
            <person name="Kulp D."/>
            <person name="Lai Z."/>
            <person name="Lasko P."/>
            <person name="Lei Y."/>
            <person name="Levitsky A.A."/>
            <person name="Li J.H."/>
            <person name="Li Z."/>
            <person name="Liang Y."/>
            <person name="Lin X."/>
            <person name="Liu X."/>
            <person name="Mattei B."/>
            <person name="McIntosh T.C."/>
            <person name="McLeod M.P."/>
            <person name="McPherson D."/>
            <person name="Merkulov G."/>
            <person name="Milshina N.V."/>
            <person name="Mobarry C."/>
            <person name="Morris J."/>
            <person name="Moshrefi A."/>
            <person name="Mount S.M."/>
            <person name="Moy M."/>
            <person name="Murphy B."/>
            <person name="Murphy L."/>
            <person name="Muzny D.M."/>
            <person name="Nelson D.L."/>
            <person name="Nelson D.R."/>
            <person name="Nelson K.A."/>
            <person name="Nixon K."/>
            <person name="Nusskern D.R."/>
            <person name="Pacleb J.M."/>
            <person name="Palazzolo M."/>
            <person name="Pittman G.S."/>
            <person name="Pan S."/>
            <person name="Pollard J."/>
            <person name="Puri V."/>
            <person name="Reese M.G."/>
            <person name="Reinert K."/>
            <person name="Remington K."/>
            <person name="Saunders R.D.C."/>
            <person name="Scheeler F."/>
            <person name="Shen H."/>
            <person name="Shue B.C."/>
            <person name="Siden-Kiamos I."/>
            <person name="Simpson M."/>
            <person name="Skupski M.P."/>
            <person name="Smith T.J."/>
            <person name="Spier E."/>
            <person name="Spradling A.C."/>
            <person name="Stapleton M."/>
            <person name="Strong R."/>
            <person name="Sun E."/>
            <person name="Svirskas R."/>
            <person name="Tector C."/>
            <person name="Turner R."/>
            <person name="Venter E."/>
            <person name="Wang A.H."/>
            <person name="Wang X."/>
            <person name="Wang Z.-Y."/>
            <person name="Wassarman D.A."/>
            <person name="Weinstock G.M."/>
            <person name="Weissenbach J."/>
            <person name="Williams S.M."/>
            <person name="Woodage T."/>
            <person name="Worley K.C."/>
            <person name="Wu D."/>
            <person name="Yang S."/>
            <person name="Yao Q.A."/>
            <person name="Ye J."/>
            <person name="Yeh R.-F."/>
            <person name="Zaveri J.S."/>
            <person name="Zhan M."/>
            <person name="Zhang G."/>
            <person name="Zhao Q."/>
            <person name="Zheng L."/>
            <person name="Zheng X.H."/>
            <person name="Zhong F.N."/>
            <person name="Zhong W."/>
            <person name="Zhou X."/>
            <person name="Zhu S.C."/>
            <person name="Zhu X."/>
            <person name="Smith H.O."/>
            <person name="Gibbs R.A."/>
            <person name="Myers E.W."/>
            <person name="Rubin G.M."/>
            <person name="Venter J.C."/>
        </authorList>
    </citation>
    <scope>NUCLEOTIDE SEQUENCE [LARGE SCALE GENOMIC DNA]</scope>
    <source>
        <strain>Berkeley</strain>
    </source>
</reference>
<reference key="3">
    <citation type="journal article" date="2002" name="Genome Biol.">
        <title>Annotation of the Drosophila melanogaster euchromatic genome: a systematic review.</title>
        <authorList>
            <person name="Misra S."/>
            <person name="Crosby M.A."/>
            <person name="Mungall C.J."/>
            <person name="Matthews B.B."/>
            <person name="Campbell K.S."/>
            <person name="Hradecky P."/>
            <person name="Huang Y."/>
            <person name="Kaminker J.S."/>
            <person name="Millburn G.H."/>
            <person name="Prochnik S.E."/>
            <person name="Smith C.D."/>
            <person name="Tupy J.L."/>
            <person name="Whitfield E.J."/>
            <person name="Bayraktaroglu L."/>
            <person name="Berman B.P."/>
            <person name="Bettencourt B.R."/>
            <person name="Celniker S.E."/>
            <person name="de Grey A.D.N.J."/>
            <person name="Drysdale R.A."/>
            <person name="Harris N.L."/>
            <person name="Richter J."/>
            <person name="Russo S."/>
            <person name="Schroeder A.J."/>
            <person name="Shu S.Q."/>
            <person name="Stapleton M."/>
            <person name="Yamada C."/>
            <person name="Ashburner M."/>
            <person name="Gelbart W.M."/>
            <person name="Rubin G.M."/>
            <person name="Lewis S.E."/>
        </authorList>
    </citation>
    <scope>GENOME REANNOTATION</scope>
    <source>
        <strain>Berkeley</strain>
    </source>
</reference>
<organism>
    <name type="scientific">Drosophila melanogaster</name>
    <name type="common">Fruit fly</name>
    <dbReference type="NCBI Taxonomy" id="7227"/>
    <lineage>
        <taxon>Eukaryota</taxon>
        <taxon>Metazoa</taxon>
        <taxon>Ecdysozoa</taxon>
        <taxon>Arthropoda</taxon>
        <taxon>Hexapoda</taxon>
        <taxon>Insecta</taxon>
        <taxon>Pterygota</taxon>
        <taxon>Neoptera</taxon>
        <taxon>Endopterygota</taxon>
        <taxon>Diptera</taxon>
        <taxon>Brachycera</taxon>
        <taxon>Muscomorpha</taxon>
        <taxon>Ephydroidea</taxon>
        <taxon>Drosophilidae</taxon>
        <taxon>Drosophila</taxon>
        <taxon>Sophophora</taxon>
    </lineage>
</organism>
<keyword id="KW-0325">Glycoprotein</keyword>
<keyword id="KW-0328">Glycosyltransferase</keyword>
<keyword id="KW-0333">Golgi apparatus</keyword>
<keyword id="KW-0472">Membrane</keyword>
<keyword id="KW-1185">Reference proteome</keyword>
<keyword id="KW-0735">Signal-anchor</keyword>
<keyword id="KW-0808">Transferase</keyword>
<keyword id="KW-0812">Transmembrane</keyword>
<keyword id="KW-1133">Transmembrane helix</keyword>
<feature type="chain" id="PRO_0000221123" description="Alpha-(1,3)-fucosyltransferase C">
    <location>
        <begin position="1"/>
        <end position="425"/>
    </location>
</feature>
<feature type="topological domain" description="Cytoplasmic" evidence="2">
    <location>
        <begin position="1"/>
        <end position="37"/>
    </location>
</feature>
<feature type="transmembrane region" description="Helical; Signal-anchor for type II membrane protein" evidence="2">
    <location>
        <begin position="38"/>
        <end position="58"/>
    </location>
</feature>
<feature type="topological domain" description="Lumenal" evidence="2">
    <location>
        <begin position="59"/>
        <end position="425"/>
    </location>
</feature>
<feature type="glycosylation site" description="N-linked (GlcNAc...) asparagine" evidence="2">
    <location>
        <position position="187"/>
    </location>
</feature>
<feature type="glycosylation site" description="N-linked (GlcNAc...) asparagine" evidence="2">
    <location>
        <position position="230"/>
    </location>
</feature>
<comment type="pathway">
    <text>Protein modification; protein glycosylation.</text>
</comment>
<comment type="subcellular location">
    <subcellularLocation>
        <location evidence="1">Golgi apparatus</location>
        <location evidence="1">Golgi stack membrane</location>
        <topology evidence="1">Single-pass type II membrane protein</topology>
    </subcellularLocation>
    <text evidence="1">Membrane-bound form in trans cisternae of Golgi.</text>
</comment>
<comment type="similarity">
    <text evidence="3">Belongs to the glycosyltransferase 10 family.</text>
</comment>
<evidence type="ECO:0000250" key="1"/>
<evidence type="ECO:0000255" key="2"/>
<evidence type="ECO:0000305" key="3"/>
<gene>
    <name type="primary">FucTC</name>
    <name type="ORF">CG40305</name>
</gene>
<name>FUCTC_DROME</name>
<proteinExistence type="evidence at transcript level"/>